<evidence type="ECO:0000255" key="1">
    <source>
        <dbReference type="HAMAP-Rule" id="MF_00188"/>
    </source>
</evidence>
<protein>
    <recommendedName>
        <fullName evidence="1">Protease HtpX</fullName>
        <ecNumber evidence="1">3.4.24.-</ecNumber>
    </recommendedName>
    <alternativeName>
        <fullName evidence="1">Heat shock protein HtpX</fullName>
    </alternativeName>
</protein>
<proteinExistence type="inferred from homology"/>
<comment type="cofactor">
    <cofactor evidence="1">
        <name>Zn(2+)</name>
        <dbReference type="ChEBI" id="CHEBI:29105"/>
    </cofactor>
    <text evidence="1">Binds 1 zinc ion per subunit.</text>
</comment>
<comment type="subcellular location">
    <subcellularLocation>
        <location evidence="1">Cell inner membrane</location>
        <topology evidence="1">Multi-pass membrane protein</topology>
    </subcellularLocation>
</comment>
<comment type="similarity">
    <text evidence="1">Belongs to the peptidase M48B family.</text>
</comment>
<gene>
    <name evidence="1" type="primary">htpX</name>
    <name type="ordered locus">PputW619_1480</name>
</gene>
<reference key="1">
    <citation type="submission" date="2008-02" db="EMBL/GenBank/DDBJ databases">
        <title>Complete sequence of Pseudomonas putida W619.</title>
        <authorList>
            <person name="Copeland A."/>
            <person name="Lucas S."/>
            <person name="Lapidus A."/>
            <person name="Barry K."/>
            <person name="Detter J.C."/>
            <person name="Glavina del Rio T."/>
            <person name="Dalin E."/>
            <person name="Tice H."/>
            <person name="Pitluck S."/>
            <person name="Chain P."/>
            <person name="Malfatti S."/>
            <person name="Shin M."/>
            <person name="Vergez L."/>
            <person name="Schmutz J."/>
            <person name="Larimer F."/>
            <person name="Land M."/>
            <person name="Hauser L."/>
            <person name="Kyrpides N."/>
            <person name="Kim E."/>
            <person name="Taghavi S."/>
            <person name="Vangronsveld D."/>
            <person name="van der Lelie D."/>
            <person name="Richardson P."/>
        </authorList>
    </citation>
    <scope>NUCLEOTIDE SEQUENCE [LARGE SCALE GENOMIC DNA]</scope>
    <source>
        <strain>W619</strain>
    </source>
</reference>
<keyword id="KW-0997">Cell inner membrane</keyword>
<keyword id="KW-1003">Cell membrane</keyword>
<keyword id="KW-0378">Hydrolase</keyword>
<keyword id="KW-0472">Membrane</keyword>
<keyword id="KW-0479">Metal-binding</keyword>
<keyword id="KW-0482">Metalloprotease</keyword>
<keyword id="KW-0645">Protease</keyword>
<keyword id="KW-0812">Transmembrane</keyword>
<keyword id="KW-1133">Transmembrane helix</keyword>
<keyword id="KW-0862">Zinc</keyword>
<organism>
    <name type="scientific">Pseudomonas putida (strain W619)</name>
    <dbReference type="NCBI Taxonomy" id="390235"/>
    <lineage>
        <taxon>Bacteria</taxon>
        <taxon>Pseudomonadati</taxon>
        <taxon>Pseudomonadota</taxon>
        <taxon>Gammaproteobacteria</taxon>
        <taxon>Pseudomonadales</taxon>
        <taxon>Pseudomonadaceae</taxon>
        <taxon>Pseudomonas</taxon>
    </lineage>
</organism>
<sequence length="295" mass="32230">MMRILLFVATNLAVVLVASITLSLFGFNGFMAANGVDLNLSSLLVFCAVFGFAGSLVSLFISKWMAKMSTGTQIISQPRTRHEQWLLQTVEELSREAGIKMPEVGIFPAYEANAFATGWNRNDALVAVSQGLLERFSPDEVRAVLAHEIGHVANGDMVTLALVQGVVNTFVMFFARIIGNFVDKVIFKNEEGQGIAYYVATIVAELVLGILASMIVMWFSRRREYRADEAGAQLAGTAAMIGALQRLRVEQGLPVHMPDTMKAFGINGGLKHGLAGLLMSHPPLEERIEALRRRG</sequence>
<accession>B1J4W3</accession>
<name>HTPX_PSEPW</name>
<dbReference type="EC" id="3.4.24.-" evidence="1"/>
<dbReference type="EMBL" id="CP000949">
    <property type="protein sequence ID" value="ACA71985.1"/>
    <property type="molecule type" value="Genomic_DNA"/>
</dbReference>
<dbReference type="SMR" id="B1J4W3"/>
<dbReference type="STRING" id="390235.PputW619_1480"/>
<dbReference type="MEROPS" id="M48.002"/>
<dbReference type="KEGG" id="ppw:PputW619_1480"/>
<dbReference type="eggNOG" id="COG0501">
    <property type="taxonomic scope" value="Bacteria"/>
</dbReference>
<dbReference type="HOGENOM" id="CLU_042266_1_0_6"/>
<dbReference type="OrthoDB" id="15218at2"/>
<dbReference type="GO" id="GO:0005886">
    <property type="term" value="C:plasma membrane"/>
    <property type="evidence" value="ECO:0007669"/>
    <property type="project" value="UniProtKB-SubCell"/>
</dbReference>
<dbReference type="GO" id="GO:0004222">
    <property type="term" value="F:metalloendopeptidase activity"/>
    <property type="evidence" value="ECO:0007669"/>
    <property type="project" value="UniProtKB-UniRule"/>
</dbReference>
<dbReference type="GO" id="GO:0008270">
    <property type="term" value="F:zinc ion binding"/>
    <property type="evidence" value="ECO:0007669"/>
    <property type="project" value="UniProtKB-UniRule"/>
</dbReference>
<dbReference type="GO" id="GO:0006508">
    <property type="term" value="P:proteolysis"/>
    <property type="evidence" value="ECO:0007669"/>
    <property type="project" value="UniProtKB-KW"/>
</dbReference>
<dbReference type="CDD" id="cd07335">
    <property type="entry name" value="M48B_HtpX_like"/>
    <property type="match status" value="1"/>
</dbReference>
<dbReference type="Gene3D" id="3.30.2010.10">
    <property type="entry name" value="Metalloproteases ('zincins'), catalytic domain"/>
    <property type="match status" value="1"/>
</dbReference>
<dbReference type="HAMAP" id="MF_00188">
    <property type="entry name" value="Pept_M48_protease_HtpX"/>
    <property type="match status" value="1"/>
</dbReference>
<dbReference type="InterPro" id="IPR050083">
    <property type="entry name" value="HtpX_protease"/>
</dbReference>
<dbReference type="InterPro" id="IPR022919">
    <property type="entry name" value="Pept_M48_protease_HtpX"/>
</dbReference>
<dbReference type="InterPro" id="IPR001915">
    <property type="entry name" value="Peptidase_M48"/>
</dbReference>
<dbReference type="NCBIfam" id="NF003965">
    <property type="entry name" value="PRK05457.1"/>
    <property type="match status" value="1"/>
</dbReference>
<dbReference type="PANTHER" id="PTHR43221">
    <property type="entry name" value="PROTEASE HTPX"/>
    <property type="match status" value="1"/>
</dbReference>
<dbReference type="PANTHER" id="PTHR43221:SF1">
    <property type="entry name" value="PROTEASE HTPX"/>
    <property type="match status" value="1"/>
</dbReference>
<dbReference type="Pfam" id="PF01435">
    <property type="entry name" value="Peptidase_M48"/>
    <property type="match status" value="1"/>
</dbReference>
<feature type="chain" id="PRO_1000098834" description="Protease HtpX">
    <location>
        <begin position="1"/>
        <end position="295"/>
    </location>
</feature>
<feature type="transmembrane region" description="Helical" evidence="1">
    <location>
        <begin position="4"/>
        <end position="24"/>
    </location>
</feature>
<feature type="transmembrane region" description="Helical" evidence="1">
    <location>
        <begin position="41"/>
        <end position="61"/>
    </location>
</feature>
<feature type="transmembrane region" description="Helical" evidence="1">
    <location>
        <begin position="158"/>
        <end position="178"/>
    </location>
</feature>
<feature type="transmembrane region" description="Helical" evidence="1">
    <location>
        <begin position="199"/>
        <end position="219"/>
    </location>
</feature>
<feature type="active site" evidence="1">
    <location>
        <position position="148"/>
    </location>
</feature>
<feature type="binding site" evidence="1">
    <location>
        <position position="147"/>
    </location>
    <ligand>
        <name>Zn(2+)</name>
        <dbReference type="ChEBI" id="CHEBI:29105"/>
        <note>catalytic</note>
    </ligand>
</feature>
<feature type="binding site" evidence="1">
    <location>
        <position position="151"/>
    </location>
    <ligand>
        <name>Zn(2+)</name>
        <dbReference type="ChEBI" id="CHEBI:29105"/>
        <note>catalytic</note>
    </ligand>
</feature>
<feature type="binding site" evidence="1">
    <location>
        <position position="224"/>
    </location>
    <ligand>
        <name>Zn(2+)</name>
        <dbReference type="ChEBI" id="CHEBI:29105"/>
        <note>catalytic</note>
    </ligand>
</feature>